<organism>
    <name type="scientific">Aspergillus flavus (strain ATCC 200026 / FGSC A1120 / IAM 13836 / NRRL 3357 / JCM 12722 / SRRC 167)</name>
    <dbReference type="NCBI Taxonomy" id="332952"/>
    <lineage>
        <taxon>Eukaryota</taxon>
        <taxon>Fungi</taxon>
        <taxon>Dikarya</taxon>
        <taxon>Ascomycota</taxon>
        <taxon>Pezizomycotina</taxon>
        <taxon>Eurotiomycetes</taxon>
        <taxon>Eurotiomycetidae</taxon>
        <taxon>Eurotiales</taxon>
        <taxon>Aspergillaceae</taxon>
        <taxon>Aspergillus</taxon>
        <taxon>Aspergillus subgen. Circumdati</taxon>
    </lineage>
</organism>
<evidence type="ECO:0000255" key="1"/>
<evidence type="ECO:0000255" key="2">
    <source>
        <dbReference type="PROSITE-ProRule" id="PRU00258"/>
    </source>
</evidence>
<evidence type="ECO:0000269" key="3">
    <source>
    </source>
</evidence>
<evidence type="ECO:0000303" key="4">
    <source>
    </source>
</evidence>
<evidence type="ECO:0000305" key="5"/>
<evidence type="ECO:0000305" key="6">
    <source>
    </source>
</evidence>
<protein>
    <recommendedName>
        <fullName evidence="4">Aldehyde reductase lnaA</fullName>
        <ecNumber evidence="3">1.2.1.101</ecNumber>
    </recommendedName>
    <alternativeName>
        <fullName evidence="4">Lna diastereomeric piperazines biosynthesis cluster protein A</fullName>
    </alternativeName>
    <alternativeName>
        <fullName evidence="4">Non-canonical nonribosomal peptide synthetase lnaA</fullName>
    </alternativeName>
</protein>
<name>LNAA_ASPFN</name>
<keyword id="KW-0436">Ligase</keyword>
<keyword id="KW-0511">Multifunctional enzyme</keyword>
<keyword id="KW-0560">Oxidoreductase</keyword>
<keyword id="KW-0596">Phosphopantetheine</keyword>
<keyword id="KW-0597">Phosphoprotein</keyword>
<gene>
    <name evidence="4" type="primary">lnaA</name>
    <name type="ORF">AFLA_101700</name>
</gene>
<accession>B8NTZ9</accession>
<dbReference type="EC" id="1.2.1.101" evidence="3"/>
<dbReference type="EMBL" id="EQ963484">
    <property type="protein sequence ID" value="EED46506.1"/>
    <property type="molecule type" value="Genomic_DNA"/>
</dbReference>
<dbReference type="RefSeq" id="XP_002384042.1">
    <property type="nucleotide sequence ID" value="XM_002384001.1"/>
</dbReference>
<dbReference type="SMR" id="B8NTZ9"/>
<dbReference type="STRING" id="332952.B8NTZ9"/>
<dbReference type="EnsemblFungi" id="EED46506">
    <property type="protein sequence ID" value="EED46506"/>
    <property type="gene ID" value="AFLA_101700"/>
</dbReference>
<dbReference type="VEuPathDB" id="FungiDB:AFLA_010420"/>
<dbReference type="eggNOG" id="KOG1178">
    <property type="taxonomic scope" value="Eukaryota"/>
</dbReference>
<dbReference type="HOGENOM" id="CLU_000022_2_17_1"/>
<dbReference type="OMA" id="FALEYCL"/>
<dbReference type="BRENDA" id="1.2.1.101">
    <property type="organism ID" value="506"/>
</dbReference>
<dbReference type="GO" id="GO:0016874">
    <property type="term" value="F:ligase activity"/>
    <property type="evidence" value="ECO:0007669"/>
    <property type="project" value="UniProtKB-KW"/>
</dbReference>
<dbReference type="GO" id="GO:0016491">
    <property type="term" value="F:oxidoreductase activity"/>
    <property type="evidence" value="ECO:0007669"/>
    <property type="project" value="UniProtKB-KW"/>
</dbReference>
<dbReference type="GO" id="GO:0031177">
    <property type="term" value="F:phosphopantetheine binding"/>
    <property type="evidence" value="ECO:0007669"/>
    <property type="project" value="InterPro"/>
</dbReference>
<dbReference type="GO" id="GO:0009058">
    <property type="term" value="P:biosynthetic process"/>
    <property type="evidence" value="ECO:0007669"/>
    <property type="project" value="UniProtKB-ARBA"/>
</dbReference>
<dbReference type="CDD" id="cd05930">
    <property type="entry name" value="A_NRPS"/>
    <property type="match status" value="1"/>
</dbReference>
<dbReference type="CDD" id="cd05235">
    <property type="entry name" value="SDR_e1"/>
    <property type="match status" value="1"/>
</dbReference>
<dbReference type="Gene3D" id="3.30.300.30">
    <property type="match status" value="1"/>
</dbReference>
<dbReference type="Gene3D" id="3.40.50.980">
    <property type="match status" value="2"/>
</dbReference>
<dbReference type="Gene3D" id="1.10.1200.10">
    <property type="entry name" value="ACP-like"/>
    <property type="match status" value="1"/>
</dbReference>
<dbReference type="Gene3D" id="2.30.38.10">
    <property type="entry name" value="Luciferase, Domain 3"/>
    <property type="match status" value="1"/>
</dbReference>
<dbReference type="Gene3D" id="3.40.50.720">
    <property type="entry name" value="NAD(P)-binding Rossmann-like Domain"/>
    <property type="match status" value="1"/>
</dbReference>
<dbReference type="InterPro" id="IPR010071">
    <property type="entry name" value="AA_adenyl_dom"/>
</dbReference>
<dbReference type="InterPro" id="IPR036736">
    <property type="entry name" value="ACP-like_sf"/>
</dbReference>
<dbReference type="InterPro" id="IPR045851">
    <property type="entry name" value="AMP-bd_C_sf"/>
</dbReference>
<dbReference type="InterPro" id="IPR020845">
    <property type="entry name" value="AMP-binding_CS"/>
</dbReference>
<dbReference type="InterPro" id="IPR000873">
    <property type="entry name" value="AMP-dep_synth/lig_dom"/>
</dbReference>
<dbReference type="InterPro" id="IPR013120">
    <property type="entry name" value="Far_NAD-bd"/>
</dbReference>
<dbReference type="InterPro" id="IPR036291">
    <property type="entry name" value="NAD(P)-bd_dom_sf"/>
</dbReference>
<dbReference type="InterPro" id="IPR020806">
    <property type="entry name" value="PKS_PP-bd"/>
</dbReference>
<dbReference type="InterPro" id="IPR009081">
    <property type="entry name" value="PP-bd_ACP"/>
</dbReference>
<dbReference type="InterPro" id="IPR010080">
    <property type="entry name" value="Thioester_reductase-like_dom"/>
</dbReference>
<dbReference type="NCBIfam" id="TIGR01733">
    <property type="entry name" value="AA-adenyl-dom"/>
    <property type="match status" value="1"/>
</dbReference>
<dbReference type="NCBIfam" id="TIGR01746">
    <property type="entry name" value="Thioester-redct"/>
    <property type="match status" value="1"/>
</dbReference>
<dbReference type="PANTHER" id="PTHR44845:SF6">
    <property type="entry name" value="BETA-ALANINE-ACTIVATING ENZYME"/>
    <property type="match status" value="1"/>
</dbReference>
<dbReference type="PANTHER" id="PTHR44845">
    <property type="entry name" value="CARRIER DOMAIN-CONTAINING PROTEIN"/>
    <property type="match status" value="1"/>
</dbReference>
<dbReference type="Pfam" id="PF00501">
    <property type="entry name" value="AMP-binding"/>
    <property type="match status" value="1"/>
</dbReference>
<dbReference type="Pfam" id="PF07993">
    <property type="entry name" value="NAD_binding_4"/>
    <property type="match status" value="1"/>
</dbReference>
<dbReference type="Pfam" id="PF00550">
    <property type="entry name" value="PP-binding"/>
    <property type="match status" value="1"/>
</dbReference>
<dbReference type="SMART" id="SM00823">
    <property type="entry name" value="PKS_PP"/>
    <property type="match status" value="1"/>
</dbReference>
<dbReference type="SUPFAM" id="SSF56801">
    <property type="entry name" value="Acetyl-CoA synthetase-like"/>
    <property type="match status" value="1"/>
</dbReference>
<dbReference type="SUPFAM" id="SSF47336">
    <property type="entry name" value="ACP-like"/>
    <property type="match status" value="1"/>
</dbReference>
<dbReference type="SUPFAM" id="SSF51735">
    <property type="entry name" value="NAD(P)-binding Rossmann-fold domains"/>
    <property type="match status" value="1"/>
</dbReference>
<dbReference type="PROSITE" id="PS00455">
    <property type="entry name" value="AMP_BINDING"/>
    <property type="match status" value="1"/>
</dbReference>
<dbReference type="PROSITE" id="PS50075">
    <property type="entry name" value="CARRIER"/>
    <property type="match status" value="1"/>
</dbReference>
<reference key="1">
    <citation type="journal article" date="2015" name="Genome Announc.">
        <title>Genome sequence of Aspergillus flavus NRRL 3357, a strain that causes aflatoxin contamination of food and feed.</title>
        <authorList>
            <person name="Nierman W.C."/>
            <person name="Yu J."/>
            <person name="Fedorova-Abrams N.D."/>
            <person name="Losada L."/>
            <person name="Cleveland T.E."/>
            <person name="Bhatnagar D."/>
            <person name="Bennett J.W."/>
            <person name="Dean R."/>
            <person name="Payne G.A."/>
        </authorList>
    </citation>
    <scope>NUCLEOTIDE SEQUENCE [LARGE SCALE GENOMIC DNA]</scope>
    <source>
        <strain>ATCC 200026 / FGSC A1120 / IAM 13836 / NRRL 3357 / JCM 12722 / SRRC 167</strain>
    </source>
</reference>
<reference key="2">
    <citation type="journal article" date="2013" name="Angew. Chem. Int. Ed.">
        <title>Homologous NRPS-like gene clusters mediate redundant small-molecule biosynthesis in Aspergillus flavus.</title>
        <authorList>
            <person name="Forseth R.R."/>
            <person name="Amaike S."/>
            <person name="Schwenk D."/>
            <person name="Affeldt K.J."/>
            <person name="Hoffmeister D."/>
            <person name="Schroeder F.C."/>
            <person name="Keller N.P."/>
        </authorList>
    </citation>
    <scope>IDENTIFICATION</scope>
    <scope>FUNCTION</scope>
    <scope>SUBSTRATE SPECIFICITY</scope>
    <scope>DOMAIN</scope>
    <scope>DISRUPTION PHENOTYPE</scope>
    <scope>INDUCTION</scope>
    <scope>PATHWAY</scope>
</reference>
<sequence length="1042" mass="115511">MPSQVLTHEEEYDLAVRQGKGLAQQFFDHAFLNPSAMAVIDGDTNLTYQDLHERAAMLARELQRGNLHTEEPVGVVVQHGISDVVAQMAILYAAGTCVPMDPTLPDLQIKGRLDRLKARYILVDRANQHRDLPFHPLIVDDSSASFSKSSHVRDNEEPMQITLEHRTHIIHTSGTTSEPKAVQIAARSILQVVFHAPFEPLYPTDRVAHVNNSSFDVSLFDIWAPLLRGACIVVVSKVTLLDLETLAAYIDRQGITVMATTTAILNLAASVYPRAFEKLRLCFIGGEAANISAIETIFQAGPPTQLINAYGPTECCIFCLAHRVTIADVQAGVVSIGKPIGRTVAYICDEAGRPVPDGHEGELLIGGAGVSPGYINQPDKNRASFVAIEGSDCQRFYRTGDIVRRRVSNGQIDYVGRRDHQVKVRGFRIELEAVESAIMKTGQFSEAVALKVEAGSEGAGSILVAFAVALSGTKPHAVLSAVDMLKAVLPDYMVPKIELISKMPVNSHAKVDRKYLQQLFRNRWAEQHIDMDNEDSTRGKLANLWASILGVPVPASNDNADFFLLGATSMQASLLISRIQKTFNVQVSLLTLYDNSSLIRLAGILEERILGTQESFCKESERHMWLEDSKLADSLVPPSDPPVDWCRDTEGRVFLTGATGFVGSFLLADLLRQPNVHQVGCLVRAVDPATGLRRLQNGLAKYDLWEDQFRYKLLPLCGTLEDRYLGLGPDRFEEIAHWASVIFHLGARVNYTQPYSLHRPANVQGTVNVLRLACAGRSKVLHYVSSISCFGPTGFITGTRTVMENEPLPRHLEALPYDHGYAQSQWVVENMLQRLMDNGFPIVVYRPGFITGHSQTGACNPDDFLSRLIIACGEMGSYPLLPNQRKEFVPVDYVNAVILHIASSTATAVGRVYHIVPPNRDLSLDMNDSMELVGSLAEGNESSVRGVSYQQWVQELDRQSPERLRPLQPMLTEKLYQGLTRWELYENMPVYDTTNTRQALESYPGGLKFPVLDSELMQKYIRYLQIRSASPKEENPLNGTDS</sequence>
<proteinExistence type="evidence at transcript level"/>
<comment type="function">
    <text evidence="3">Non-canonical nonribosomal peptide synthetase; part of the lna gene cluster that mediates the biosynthesis of diastereomeric piperazines. Lna and lnb clusters encode sets of enzymes that produce overlapping sets of previously undescribed metabolites such as piperazinomycin-like metabolites or morpholine (PubMed:23281040). The lna and lnb biosynthetic pathways appear to be part of a signaling network that controls the formation of sclerotia, a resilient overwintering structure (PubMed:23281040). One primary function of the non-canonical nonribosomal peptide synthetases lnaA and lnbA consists in the reduction of L-tyrosine (PubMed:23281040). The presence in the clusters of tailoring enzymes such as the oxidoreductases lnaB, lnbB, lnaE or lnbE, as well as of the cytochrome P450 monooxygenases lnaC, lnaD, or lnbC, might explain formation of various diastereomeric piperazines (PubMed:23281040).</text>
</comment>
<comment type="catalytic activity">
    <reaction evidence="3">
        <text>L-tyrosinal + AMP + diphosphate + NADP(+) = L-tyrosine + ATP + NADPH + H(+)</text>
        <dbReference type="Rhea" id="RHEA:57412"/>
        <dbReference type="ChEBI" id="CHEBI:15378"/>
        <dbReference type="ChEBI" id="CHEBI:30616"/>
        <dbReference type="ChEBI" id="CHEBI:33019"/>
        <dbReference type="ChEBI" id="CHEBI:57783"/>
        <dbReference type="ChEBI" id="CHEBI:58315"/>
        <dbReference type="ChEBI" id="CHEBI:58349"/>
        <dbReference type="ChEBI" id="CHEBI:141668"/>
        <dbReference type="ChEBI" id="CHEBI:456215"/>
        <dbReference type="EC" id="1.2.1.101"/>
    </reaction>
    <physiologicalReaction direction="right-to-left" evidence="3">
        <dbReference type="Rhea" id="RHEA:57414"/>
    </physiologicalReaction>
</comment>
<comment type="pathway">
    <text evidence="3">Secondary metabolite biosynthesis.</text>
</comment>
<comment type="induction">
    <text evidence="3">Expression is regulated by a complex signaling network which may include cross-pathway interactions mediated by sensing of the cluster final products or shared biosynthetic intermediates.</text>
</comment>
<comment type="domain">
    <text evidence="6">NRP synthetases are composed of discrete domains (adenylation (A), thiolation (T) or peptidyl carrier protein (PCP) and condensation (C) domains) which when grouped together are referred to as a single module. Each module is responsible for the recognition (via the A domain) and incorporation of a single amino acid into the growing peptide product. Thus, an NRP synthetase is generally composed of one or more modules and can terminate in a thioesterase domain (TE) that releases the newly synthesized peptide from the enzyme. Occasionally, epimerase (E) domains (responsible for L- to D-amino acid conversion) are present within the NRP synthetase. LnaA contains an amino acid adenylation domain (A), a peptidyl carrier protein (PCP) domain with a phosphopantetheine prosthetic group, and a short-chain dehydrogenase/reductase terminus (R), but it does not have an identifiable condensation (C) domain required for the formation of peptide bonds during non-ribosomal peptide synthesis.</text>
</comment>
<comment type="disruption phenotype">
    <text evidence="3">Abolishes the production of piperazines and suppresses the formation of sclerotia when lnbA is also disrupted.</text>
</comment>
<comment type="similarity">
    <text evidence="5">Belongs to the NRP synthetase family.</text>
</comment>
<feature type="chain" id="PRO_0000446074" description="Aldehyde reductase lnaA">
    <location>
        <begin position="1"/>
        <end position="1042"/>
    </location>
</feature>
<feature type="domain" description="Carrier" evidence="2 6">
    <location>
        <begin position="532"/>
        <end position="609"/>
    </location>
</feature>
<feature type="region of interest" description="Adenylation (A) domain" evidence="1 6">
    <location>
        <begin position="29"/>
        <end position="425"/>
    </location>
</feature>
<feature type="region of interest" description="Short-chain dehydrogenase/reductase (R) domain" evidence="1 6">
    <location>
        <begin position="655"/>
        <end position="897"/>
    </location>
</feature>
<feature type="modified residue" description="O-(pantetheine 4'-phosphoryl)serine" evidence="2">
    <location>
        <position position="569"/>
    </location>
</feature>